<proteinExistence type="inferred from homology"/>
<sequence>MRHLALEMISELLDLGLDTIDGWLHTEFRPVPAGVSHNMSLHEMYDLDVTGQEDENEEAVDGVFSDAMLLAAEEGIEMPNLYSPGPLVGGGEMPELQPEEEDLFCYEDGFPPSDSEEGEHSQVETERKMAEAAAAGAAAAARREQDDFRLDCPSVPGHGCSSCDYHRKTSGCPEILCSLCYLRANSMFIYSPVSDSEPDEPDSTTADSNHGSPPTLRCTPPRDLPRPVPVKASPGKRPAVNSLHDLIEEVEQTVPLDLSLKRSRSN</sequence>
<evidence type="ECO:0000250" key="1"/>
<evidence type="ECO:0000250" key="2">
    <source>
        <dbReference type="UniProtKB" id="P03254"/>
    </source>
</evidence>
<evidence type="ECO:0000250" key="3">
    <source>
        <dbReference type="UniProtKB" id="P03255"/>
    </source>
</evidence>
<evidence type="ECO:0000255" key="4"/>
<evidence type="ECO:0000256" key="5">
    <source>
        <dbReference type="SAM" id="MobiDB-lite"/>
    </source>
</evidence>
<evidence type="ECO:0000305" key="6"/>
<organism>
    <name type="scientific">Simian adenovirus serotype 7</name>
    <name type="common">SAdV-7</name>
    <name type="synonym">Simian adenovirus 7</name>
    <dbReference type="NCBI Taxonomy" id="10532"/>
    <lineage>
        <taxon>Viruses</taxon>
        <taxon>Varidnaviria</taxon>
        <taxon>Bamfordvirae</taxon>
        <taxon>Preplasmiviricota</taxon>
        <taxon>Tectiliviricetes</taxon>
        <taxon>Rowavirales</taxon>
        <taxon>Adenoviridae</taxon>
        <taxon>Mastadenovirus</taxon>
        <taxon>Human mastadenovirus G</taxon>
    </lineage>
</organism>
<protein>
    <recommendedName>
        <fullName>Early E1A protein</fullName>
    </recommendedName>
    <alternativeName>
        <fullName>Early E1A 28 kDa protein</fullName>
    </alternativeName>
</protein>
<feature type="chain" id="PRO_0000221705" description="Early E1A protein">
    <location>
        <begin position="1"/>
        <end position="266"/>
    </location>
</feature>
<feature type="zinc finger region" evidence="2">
    <location>
        <begin position="160"/>
        <end position="180"/>
    </location>
</feature>
<feature type="region of interest" description="Interaction with RB1 in competition with E2F1" evidence="1">
    <location>
        <begin position="39"/>
        <end position="47"/>
    </location>
</feature>
<feature type="region of interest" description="Disordered" evidence="5">
    <location>
        <begin position="193"/>
        <end position="244"/>
    </location>
</feature>
<feature type="short sequence motif" description="PXLXP motif, interaction with host ZMYND11" evidence="1">
    <location>
        <begin position="94"/>
        <end position="98"/>
    </location>
</feature>
<feature type="short sequence motif" description="LXCXE motif, interaction with host RB1" evidence="4">
    <location>
        <begin position="103"/>
        <end position="107"/>
    </location>
</feature>
<feature type="short sequence motif" description="PXDLS motif, CTBP-binding" evidence="1">
    <location>
        <begin position="255"/>
        <end position="259"/>
    </location>
</feature>
<feature type="short sequence motif" description="Nuclear localization signal" evidence="4">
    <location>
        <begin position="261"/>
        <end position="265"/>
    </location>
</feature>
<feature type="compositionally biased region" description="Polar residues" evidence="5">
    <location>
        <begin position="203"/>
        <end position="212"/>
    </location>
</feature>
<feature type="splice variant" id="VSP_000207" description="In isoform 2." evidence="6">
    <location>
        <begin position="119"/>
        <end position="191"/>
    </location>
</feature>
<organismHost>
    <name type="scientific">Cercopithecinae</name>
    <dbReference type="NCBI Taxonomy" id="9528"/>
</organismHost>
<dbReference type="EMBL" id="K03325">
    <property type="protein sequence ID" value="AAA42513.1"/>
    <property type="molecule type" value="Genomic_DNA"/>
</dbReference>
<dbReference type="EMBL" id="K03325">
    <property type="protein sequence ID" value="AAA42512.1"/>
    <property type="molecule type" value="Genomic_DNA"/>
</dbReference>
<dbReference type="GO" id="GO:0042025">
    <property type="term" value="C:host cell nucleus"/>
    <property type="evidence" value="ECO:0007669"/>
    <property type="project" value="UniProtKB-SubCell"/>
</dbReference>
<dbReference type="GO" id="GO:0008270">
    <property type="term" value="F:zinc ion binding"/>
    <property type="evidence" value="ECO:0007669"/>
    <property type="project" value="UniProtKB-KW"/>
</dbReference>
<dbReference type="GO" id="GO:0006355">
    <property type="term" value="P:regulation of DNA-templated transcription"/>
    <property type="evidence" value="ECO:0007669"/>
    <property type="project" value="InterPro"/>
</dbReference>
<dbReference type="GO" id="GO:0039645">
    <property type="term" value="P:symbiont-mediated perturbation of host cell cycle G1/S transition checkpoint"/>
    <property type="evidence" value="ECO:0007669"/>
    <property type="project" value="UniProtKB-KW"/>
</dbReference>
<dbReference type="GO" id="GO:0052170">
    <property type="term" value="P:symbiont-mediated suppression of host innate immune response"/>
    <property type="evidence" value="ECO:0007669"/>
    <property type="project" value="UniProtKB-KW"/>
</dbReference>
<dbReference type="GO" id="GO:0039563">
    <property type="term" value="P:symbiont-mediated suppression of host JAK-STAT cascade via inhibition of STAT1 activity"/>
    <property type="evidence" value="ECO:0007669"/>
    <property type="project" value="UniProtKB-KW"/>
</dbReference>
<dbReference type="GO" id="GO:0039502">
    <property type="term" value="P:symbiont-mediated suppression of host type I interferon-mediated signaling pathway"/>
    <property type="evidence" value="ECO:0007669"/>
    <property type="project" value="UniProtKB-KW"/>
</dbReference>
<dbReference type="InterPro" id="IPR014410">
    <property type="entry name" value="Aden_E1A"/>
</dbReference>
<dbReference type="Pfam" id="PF02703">
    <property type="entry name" value="Adeno_E1A"/>
    <property type="match status" value="1"/>
</dbReference>
<dbReference type="PIRSF" id="PIRSF003669">
    <property type="entry name" value="Aden_E1A"/>
    <property type="match status" value="1"/>
</dbReference>
<accession>P06499</accession>
<keyword id="KW-0010">Activator</keyword>
<keyword id="KW-0025">Alternative splicing</keyword>
<keyword id="KW-0244">Early protein</keyword>
<keyword id="KW-1078">G1/S host cell cycle checkpoint dysregulation by virus</keyword>
<keyword id="KW-1048">Host nucleus</keyword>
<keyword id="KW-0945">Host-virus interaction</keyword>
<keyword id="KW-1090">Inhibition of host innate immune response by virus</keyword>
<keyword id="KW-1114">Inhibition of host interferon signaling pathway by virus</keyword>
<keyword id="KW-1105">Inhibition of host STAT1 by virus</keyword>
<keyword id="KW-0922">Interferon antiviral system evasion</keyword>
<keyword id="KW-0479">Metal-binding</keyword>
<keyword id="KW-1121">Modulation of host cell cycle by virus</keyword>
<keyword id="KW-0804">Transcription</keyword>
<keyword id="KW-0805">Transcription regulation</keyword>
<keyword id="KW-0899">Viral immunoevasion</keyword>
<keyword id="KW-0862">Zinc</keyword>
<keyword id="KW-0863">Zinc-finger</keyword>
<name>E1A_ADES7</name>
<comment type="function">
    <text evidence="3">Plays a role in viral genome replication by driving entry of quiescent cells into the cell cycle. Stimulation of progression from G1 to S phase allows the virus to efficiently use the cellular DNA replicating machinery to achieve viral genome replication. E1A protein has both transforming and trans-activating activities. Induces the disassembly of the E2F1 transcription factor from RB1 by direct competition for the same binding site on RB1, with subsequent transcriptional activation of E2F1-regulated S-phase genes and of the E2 region of the adenoviral genome. Release of E2F1 leads to the ARF-mediated inhibition of MDM2 and causes TP53/p53 to accumulate because it is not targeted for degradation by MDM2-mediated ubiquitination anymore. This increase in TP53, in turn, would arrest the cell proliferation and direct its death but this effect is counteracted by the viral protein E1B-55K. Inactivation of the ability of RB1 to arrest the cell cycle is critical for cellular transformation, uncontrolled cellular growth and proliferation induced by viral infection. Interaction with RBX1 and CUL1 inhibits ubiquitination of the proteins targeted by SCF(FBXW7) ubiquitin ligase complex, and may be linked to unregulated host cell proliferation. The tumorigenesis-restraining activity of E1A may be related to the disruption of the host CtBP-CtIP complex through the CtBP binding motif.</text>
</comment>
<comment type="subunit">
    <text evidence="2 3">Interacts with host UBE2I; this interaction interferes with polySUMOylation. Interacts with host RB1; this interaction induces the aberrant dissociation of RB1-E2F1 complex thereby disrupting the activity of RB1 and activating E2F1-regulated genes. Interacts with host ATF7; the interaction enhances ATF7-mediated viral transactivation activity which requires the zinc binding domains of both proteins. Isoform early E1A 32 kDa protein and isoform early E1A 26 kDa protein interact (via N-terminus) with CUL1 and E3 ubiquitin ligase RBX1; these interactions inhibit RBX1-CUL1-dependent elongation reaction of ubiquitin chains and attenuate ubiquitination of SCF(FBXW7) target proteins. Interacts (via PXLXP motif) with host ZMYND11/BS69 (via MYND-type zinc finger); this interaction inhibits E1A mediated transactivation. Interacts with host EP300; this interaction stimulates the acetylation of RB1 by recruiting EP300 and RB1 into a multimeric-protein complex. Interacts with host CTBP1 and CTBP2; this interaction seems to potentiate viral replication. Interacts with host DCAF7. Interacts with host DYRK1A. Interacts with host KPNA4; this interaction allows E1A import into the host nucleus. Interacts with host EP400; this interaction stabilizes MYC. Interacts with host TBP protein; this interaction probably disrupts the TBP-TATA complex.</text>
</comment>
<comment type="subcellular location">
    <subcellularLocation>
        <location evidence="3">Host nucleus</location>
    </subcellularLocation>
</comment>
<comment type="alternative products">
    <event type="alternative splicing"/>
    <isoform>
        <id>P06499-1</id>
        <name>1</name>
        <name>Early E1A 28 kDa protein</name>
        <sequence type="displayed"/>
    </isoform>
    <isoform>
        <id>P06499-2</id>
        <name>2</name>
        <name>Early E1A 24 kDa protein</name>
        <sequence type="described" ref="VSP_000207"/>
    </isoform>
    <text>Isoforms are derived from the E1 region of the genome.</text>
</comment>
<comment type="similarity">
    <text evidence="6">Belongs to the adenoviridae E1A protein family.</text>
</comment>
<reference key="1">
    <citation type="journal article" date="1985" name="J. Virol.">
        <title>E1a regions of the human adenoviruses and of the highly oncogenic simian adenovirus 7 are closely related.</title>
        <authorList>
            <person name="Kimelman D."/>
            <person name="Miller J.S."/>
            <person name="Porter D."/>
            <person name="Roberts B.E."/>
        </authorList>
    </citation>
    <scope>NUCLEOTIDE SEQUENCE [GENOMIC DNA] (ISOFORMS 1 AND 2)</scope>
</reference>